<protein>
    <recommendedName>
        <fullName evidence="1">ATP synthase subunit delta</fullName>
    </recommendedName>
    <alternativeName>
        <fullName evidence="1">ATP synthase F(1) sector subunit delta</fullName>
    </alternativeName>
    <alternativeName>
        <fullName evidence="1">F-type ATPase subunit delta</fullName>
        <shortName evidence="1">F-ATPase subunit delta</shortName>
    </alternativeName>
</protein>
<proteinExistence type="inferred from homology"/>
<dbReference type="EMBL" id="CP000802">
    <property type="protein sequence ID" value="ABV08152.1"/>
    <property type="molecule type" value="Genomic_DNA"/>
</dbReference>
<dbReference type="RefSeq" id="WP_001288587.1">
    <property type="nucleotide sequence ID" value="NC_009800.1"/>
</dbReference>
<dbReference type="SMR" id="A8A6J8"/>
<dbReference type="GeneID" id="93778232"/>
<dbReference type="KEGG" id="ecx:EcHS_A3951"/>
<dbReference type="HOGENOM" id="CLU_085114_3_0_6"/>
<dbReference type="GO" id="GO:0005886">
    <property type="term" value="C:plasma membrane"/>
    <property type="evidence" value="ECO:0007669"/>
    <property type="project" value="UniProtKB-SubCell"/>
</dbReference>
<dbReference type="GO" id="GO:0045259">
    <property type="term" value="C:proton-transporting ATP synthase complex"/>
    <property type="evidence" value="ECO:0007669"/>
    <property type="project" value="UniProtKB-KW"/>
</dbReference>
<dbReference type="GO" id="GO:0046933">
    <property type="term" value="F:proton-transporting ATP synthase activity, rotational mechanism"/>
    <property type="evidence" value="ECO:0007669"/>
    <property type="project" value="UniProtKB-UniRule"/>
</dbReference>
<dbReference type="FunFam" id="1.10.520.20:FF:000001">
    <property type="entry name" value="ATP synthase subunit delta"/>
    <property type="match status" value="1"/>
</dbReference>
<dbReference type="Gene3D" id="1.10.520.20">
    <property type="entry name" value="N-terminal domain of the delta subunit of the F1F0-ATP synthase"/>
    <property type="match status" value="1"/>
</dbReference>
<dbReference type="HAMAP" id="MF_01416">
    <property type="entry name" value="ATP_synth_delta_bact"/>
    <property type="match status" value="1"/>
</dbReference>
<dbReference type="InterPro" id="IPR026015">
    <property type="entry name" value="ATP_synth_OSCP/delta_N_sf"/>
</dbReference>
<dbReference type="InterPro" id="IPR020781">
    <property type="entry name" value="ATPase_OSCP/d_CS"/>
</dbReference>
<dbReference type="InterPro" id="IPR000711">
    <property type="entry name" value="ATPase_OSCP/dsu"/>
</dbReference>
<dbReference type="NCBIfam" id="TIGR01145">
    <property type="entry name" value="ATP_synt_delta"/>
    <property type="match status" value="1"/>
</dbReference>
<dbReference type="NCBIfam" id="NF004402">
    <property type="entry name" value="PRK05758.2-2"/>
    <property type="match status" value="1"/>
</dbReference>
<dbReference type="NCBIfam" id="NF004404">
    <property type="entry name" value="PRK05758.2-5"/>
    <property type="match status" value="1"/>
</dbReference>
<dbReference type="PANTHER" id="PTHR11910">
    <property type="entry name" value="ATP SYNTHASE DELTA CHAIN"/>
    <property type="match status" value="1"/>
</dbReference>
<dbReference type="Pfam" id="PF00213">
    <property type="entry name" value="OSCP"/>
    <property type="match status" value="1"/>
</dbReference>
<dbReference type="PRINTS" id="PR00125">
    <property type="entry name" value="ATPASEDELTA"/>
</dbReference>
<dbReference type="SUPFAM" id="SSF47928">
    <property type="entry name" value="N-terminal domain of the delta subunit of the F1F0-ATP synthase"/>
    <property type="match status" value="1"/>
</dbReference>
<dbReference type="PROSITE" id="PS00389">
    <property type="entry name" value="ATPASE_DELTA"/>
    <property type="match status" value="1"/>
</dbReference>
<accession>A8A6J8</accession>
<reference key="1">
    <citation type="journal article" date="2008" name="J. Bacteriol.">
        <title>The pangenome structure of Escherichia coli: comparative genomic analysis of E. coli commensal and pathogenic isolates.</title>
        <authorList>
            <person name="Rasko D.A."/>
            <person name="Rosovitz M.J."/>
            <person name="Myers G.S.A."/>
            <person name="Mongodin E.F."/>
            <person name="Fricke W.F."/>
            <person name="Gajer P."/>
            <person name="Crabtree J."/>
            <person name="Sebaihia M."/>
            <person name="Thomson N.R."/>
            <person name="Chaudhuri R."/>
            <person name="Henderson I.R."/>
            <person name="Sperandio V."/>
            <person name="Ravel J."/>
        </authorList>
    </citation>
    <scope>NUCLEOTIDE SEQUENCE [LARGE SCALE GENOMIC DNA]</scope>
    <source>
        <strain>HS</strain>
    </source>
</reference>
<gene>
    <name evidence="1" type="primary">atpH</name>
    <name type="ordered locus">EcHS_A3951</name>
</gene>
<organism>
    <name type="scientific">Escherichia coli O9:H4 (strain HS)</name>
    <dbReference type="NCBI Taxonomy" id="331112"/>
    <lineage>
        <taxon>Bacteria</taxon>
        <taxon>Pseudomonadati</taxon>
        <taxon>Pseudomonadota</taxon>
        <taxon>Gammaproteobacteria</taxon>
        <taxon>Enterobacterales</taxon>
        <taxon>Enterobacteriaceae</taxon>
        <taxon>Escherichia</taxon>
    </lineage>
</organism>
<comment type="function">
    <text evidence="1">F(1)F(0) ATP synthase produces ATP from ADP in the presence of a proton or sodium gradient. F-type ATPases consist of two structural domains, F(1) containing the extramembraneous catalytic core and F(0) containing the membrane proton channel, linked together by a central stalk and a peripheral stalk. During catalysis, ATP synthesis in the catalytic domain of F(1) is coupled via a rotary mechanism of the central stalk subunits to proton translocation.</text>
</comment>
<comment type="function">
    <text evidence="1">This protein is part of the stalk that links CF(0) to CF(1). It either transmits conformational changes from CF(0) to CF(1) or is implicated in proton conduction.</text>
</comment>
<comment type="subunit">
    <text evidence="1">F-type ATPases have 2 components, F(1) - the catalytic core - and F(0) - the membrane proton channel. F(1) has five subunits: alpha(3), beta(3), gamma(1), delta(1), epsilon(1). F(0) has three main subunits: a(1), b(2) and c(10-14). The alpha and beta chains form an alternating ring which encloses part of the gamma chain. F(1) is attached to F(0) by a central stalk formed by the gamma and epsilon chains, while a peripheral stalk is formed by the delta and b chains.</text>
</comment>
<comment type="subcellular location">
    <subcellularLocation>
        <location evidence="1">Cell inner membrane</location>
        <topology evidence="1">Peripheral membrane protein</topology>
    </subcellularLocation>
</comment>
<comment type="similarity">
    <text evidence="1">Belongs to the ATPase delta chain family.</text>
</comment>
<name>ATPD_ECOHS</name>
<evidence type="ECO:0000255" key="1">
    <source>
        <dbReference type="HAMAP-Rule" id="MF_01416"/>
    </source>
</evidence>
<keyword id="KW-0066">ATP synthesis</keyword>
<keyword id="KW-0997">Cell inner membrane</keyword>
<keyword id="KW-1003">Cell membrane</keyword>
<keyword id="KW-0139">CF(1)</keyword>
<keyword id="KW-0375">Hydrogen ion transport</keyword>
<keyword id="KW-0406">Ion transport</keyword>
<keyword id="KW-0472">Membrane</keyword>
<keyword id="KW-0813">Transport</keyword>
<sequence>MSEFITVARPYAKAAFDFAVEHQSVERWQDMLAFAAEVTKNEQMAELLSGALAPETLAESFIAVCGEQLDENGQNLIRVMAENGRLNALPDVLEQFIHLRAVSEATAEVDVISAAALSEQQLAKISAAMEKRLSRKVKLNCKIDKSVMAGVIIRAGDMVIDGSVRGRLERLADVLQS</sequence>
<feature type="chain" id="PRO_0000370980" description="ATP synthase subunit delta">
    <location>
        <begin position="1"/>
        <end position="177"/>
    </location>
</feature>